<name>RL31_BLOPB</name>
<protein>
    <recommendedName>
        <fullName evidence="1">Large ribosomal subunit protein bL31</fullName>
    </recommendedName>
    <alternativeName>
        <fullName evidence="2">50S ribosomal protein L31</fullName>
    </alternativeName>
</protein>
<organism>
    <name type="scientific">Blochmanniella pennsylvanica (strain BPEN)</name>
    <dbReference type="NCBI Taxonomy" id="291272"/>
    <lineage>
        <taxon>Bacteria</taxon>
        <taxon>Pseudomonadati</taxon>
        <taxon>Pseudomonadota</taxon>
        <taxon>Gammaproteobacteria</taxon>
        <taxon>Enterobacterales</taxon>
        <taxon>Enterobacteriaceae</taxon>
        <taxon>ant endosymbionts</taxon>
        <taxon>Candidatus Blochmanniella</taxon>
    </lineage>
</organism>
<reference key="1">
    <citation type="journal article" date="2005" name="Genome Res.">
        <title>Genome sequence of Blochmannia pennsylvanicus indicates parallel evolutionary trends among bacterial mutualists of insects.</title>
        <authorList>
            <person name="Degnan P.H."/>
            <person name="Lazarus A.B."/>
            <person name="Wernegreen J.J."/>
        </authorList>
    </citation>
    <scope>NUCLEOTIDE SEQUENCE [LARGE SCALE GENOMIC DNA]</scope>
    <source>
        <strain>BPEN</strain>
    </source>
</reference>
<proteinExistence type="inferred from homology"/>
<gene>
    <name evidence="1" type="primary">rpmE</name>
    <name type="ordered locus">BPEN_621</name>
</gene>
<dbReference type="EMBL" id="CP000016">
    <property type="protein sequence ID" value="AAZ41219.1"/>
    <property type="molecule type" value="Genomic_DNA"/>
</dbReference>
<dbReference type="RefSeq" id="WP_011283130.1">
    <property type="nucleotide sequence ID" value="NC_007292.1"/>
</dbReference>
<dbReference type="SMR" id="Q491Y5"/>
<dbReference type="STRING" id="291272.BPEN_621"/>
<dbReference type="KEGG" id="bpn:BPEN_621"/>
<dbReference type="eggNOG" id="COG0254">
    <property type="taxonomic scope" value="Bacteria"/>
</dbReference>
<dbReference type="HOGENOM" id="CLU_114306_4_3_6"/>
<dbReference type="OrthoDB" id="9803251at2"/>
<dbReference type="Proteomes" id="UP000007794">
    <property type="component" value="Chromosome"/>
</dbReference>
<dbReference type="GO" id="GO:1990904">
    <property type="term" value="C:ribonucleoprotein complex"/>
    <property type="evidence" value="ECO:0007669"/>
    <property type="project" value="UniProtKB-KW"/>
</dbReference>
<dbReference type="GO" id="GO:0005840">
    <property type="term" value="C:ribosome"/>
    <property type="evidence" value="ECO:0007669"/>
    <property type="project" value="UniProtKB-KW"/>
</dbReference>
<dbReference type="GO" id="GO:0046872">
    <property type="term" value="F:metal ion binding"/>
    <property type="evidence" value="ECO:0007669"/>
    <property type="project" value="UniProtKB-KW"/>
</dbReference>
<dbReference type="GO" id="GO:0019843">
    <property type="term" value="F:rRNA binding"/>
    <property type="evidence" value="ECO:0007669"/>
    <property type="project" value="UniProtKB-KW"/>
</dbReference>
<dbReference type="GO" id="GO:0003735">
    <property type="term" value="F:structural constituent of ribosome"/>
    <property type="evidence" value="ECO:0007669"/>
    <property type="project" value="InterPro"/>
</dbReference>
<dbReference type="GO" id="GO:0006412">
    <property type="term" value="P:translation"/>
    <property type="evidence" value="ECO:0007669"/>
    <property type="project" value="UniProtKB-UniRule"/>
</dbReference>
<dbReference type="Gene3D" id="4.10.830.30">
    <property type="entry name" value="Ribosomal protein L31"/>
    <property type="match status" value="1"/>
</dbReference>
<dbReference type="HAMAP" id="MF_00501">
    <property type="entry name" value="Ribosomal_bL31_1"/>
    <property type="match status" value="1"/>
</dbReference>
<dbReference type="InterPro" id="IPR034704">
    <property type="entry name" value="Ribosomal_bL28/bL31-like_sf"/>
</dbReference>
<dbReference type="InterPro" id="IPR002150">
    <property type="entry name" value="Ribosomal_bL31"/>
</dbReference>
<dbReference type="InterPro" id="IPR027491">
    <property type="entry name" value="Ribosomal_bL31_A"/>
</dbReference>
<dbReference type="InterPro" id="IPR042105">
    <property type="entry name" value="Ribosomal_bL31_sf"/>
</dbReference>
<dbReference type="NCBIfam" id="TIGR00105">
    <property type="entry name" value="L31"/>
    <property type="match status" value="1"/>
</dbReference>
<dbReference type="NCBIfam" id="NF000612">
    <property type="entry name" value="PRK00019.1"/>
    <property type="match status" value="1"/>
</dbReference>
<dbReference type="PANTHER" id="PTHR33280">
    <property type="entry name" value="50S RIBOSOMAL PROTEIN L31, CHLOROPLASTIC"/>
    <property type="match status" value="1"/>
</dbReference>
<dbReference type="PANTHER" id="PTHR33280:SF6">
    <property type="entry name" value="LARGE RIBOSOMAL SUBUNIT PROTEIN BL31A"/>
    <property type="match status" value="1"/>
</dbReference>
<dbReference type="Pfam" id="PF01197">
    <property type="entry name" value="Ribosomal_L31"/>
    <property type="match status" value="1"/>
</dbReference>
<dbReference type="PRINTS" id="PR01249">
    <property type="entry name" value="RIBOSOMALL31"/>
</dbReference>
<dbReference type="SUPFAM" id="SSF143800">
    <property type="entry name" value="L28p-like"/>
    <property type="match status" value="1"/>
</dbReference>
<dbReference type="PROSITE" id="PS01143">
    <property type="entry name" value="RIBOSOMAL_L31"/>
    <property type="match status" value="1"/>
</dbReference>
<comment type="function">
    <text evidence="1">Binds the 23S rRNA.</text>
</comment>
<comment type="cofactor">
    <cofactor evidence="1">
        <name>Zn(2+)</name>
        <dbReference type="ChEBI" id="CHEBI:29105"/>
    </cofactor>
    <text evidence="1">Binds 1 zinc ion per subunit.</text>
</comment>
<comment type="subunit">
    <text evidence="1">Part of the 50S ribosomal subunit.</text>
</comment>
<comment type="similarity">
    <text evidence="1">Belongs to the bacterial ribosomal protein bL31 family. Type A subfamily.</text>
</comment>
<feature type="chain" id="PRO_0000259170" description="Large ribosomal subunit protein bL31">
    <location>
        <begin position="1"/>
        <end position="82"/>
    </location>
</feature>
<feature type="binding site" evidence="1">
    <location>
        <position position="16"/>
    </location>
    <ligand>
        <name>Zn(2+)</name>
        <dbReference type="ChEBI" id="CHEBI:29105"/>
    </ligand>
</feature>
<feature type="binding site" evidence="1">
    <location>
        <position position="18"/>
    </location>
    <ligand>
        <name>Zn(2+)</name>
        <dbReference type="ChEBI" id="CHEBI:29105"/>
    </ligand>
</feature>
<feature type="binding site" evidence="1">
    <location>
        <position position="37"/>
    </location>
    <ligand>
        <name>Zn(2+)</name>
        <dbReference type="ChEBI" id="CHEBI:29105"/>
    </ligand>
</feature>
<feature type="binding site" evidence="1">
    <location>
        <position position="40"/>
    </location>
    <ligand>
        <name>Zn(2+)</name>
        <dbReference type="ChEBI" id="CHEBI:29105"/>
    </ligand>
</feature>
<accession>Q491Y5</accession>
<sequence>MKKNVHPKYNEISAYCSCGNIINTKSTLNRNLNIDVCHLCHPFYTGTQRILDTRGRVNIFNKRFNLSINADFLPIDKKLNKK</sequence>
<evidence type="ECO:0000255" key="1">
    <source>
        <dbReference type="HAMAP-Rule" id="MF_00501"/>
    </source>
</evidence>
<evidence type="ECO:0000305" key="2"/>
<keyword id="KW-0479">Metal-binding</keyword>
<keyword id="KW-1185">Reference proteome</keyword>
<keyword id="KW-0687">Ribonucleoprotein</keyword>
<keyword id="KW-0689">Ribosomal protein</keyword>
<keyword id="KW-0694">RNA-binding</keyword>
<keyword id="KW-0699">rRNA-binding</keyword>
<keyword id="KW-0862">Zinc</keyword>